<organism>
    <name type="scientific">Staphylococcus aureus (strain MW2)</name>
    <dbReference type="NCBI Taxonomy" id="196620"/>
    <lineage>
        <taxon>Bacteria</taxon>
        <taxon>Bacillati</taxon>
        <taxon>Bacillota</taxon>
        <taxon>Bacilli</taxon>
        <taxon>Bacillales</taxon>
        <taxon>Staphylococcaceae</taxon>
        <taxon>Staphylococcus</taxon>
    </lineage>
</organism>
<name>RPOE_STAAW</name>
<protein>
    <recommendedName>
        <fullName>Probable DNA-directed RNA polymerase subunit delta</fullName>
    </recommendedName>
    <alternativeName>
        <fullName>RNAP delta factor</fullName>
    </alternativeName>
</protein>
<accession>P66716</accession>
<accession>Q99SD0</accession>
<dbReference type="EMBL" id="BA000033">
    <property type="protein sequence ID" value="BAB95917.1"/>
    <property type="molecule type" value="Genomic_DNA"/>
</dbReference>
<dbReference type="RefSeq" id="WP_000701483.1">
    <property type="nucleotide sequence ID" value="NC_003923.1"/>
</dbReference>
<dbReference type="SMR" id="P66716"/>
<dbReference type="GeneID" id="98346435"/>
<dbReference type="KEGG" id="sam:MW2052"/>
<dbReference type="HOGENOM" id="CLU_116648_1_0_9"/>
<dbReference type="GO" id="GO:0000428">
    <property type="term" value="C:DNA-directed RNA polymerase complex"/>
    <property type="evidence" value="ECO:0007669"/>
    <property type="project" value="UniProtKB-KW"/>
</dbReference>
<dbReference type="GO" id="GO:0003899">
    <property type="term" value="F:DNA-directed RNA polymerase activity"/>
    <property type="evidence" value="ECO:0007669"/>
    <property type="project" value="UniProtKB-UniRule"/>
</dbReference>
<dbReference type="GO" id="GO:0006351">
    <property type="term" value="P:DNA-templated transcription"/>
    <property type="evidence" value="ECO:0007669"/>
    <property type="project" value="InterPro"/>
</dbReference>
<dbReference type="GO" id="GO:0006355">
    <property type="term" value="P:regulation of DNA-templated transcription"/>
    <property type="evidence" value="ECO:0007669"/>
    <property type="project" value="UniProtKB-UniRule"/>
</dbReference>
<dbReference type="Gene3D" id="1.10.10.1250">
    <property type="entry name" value="RNA polymerase, subunit delta, N-terminal domain"/>
    <property type="match status" value="1"/>
</dbReference>
<dbReference type="HAMAP" id="MF_00357">
    <property type="entry name" value="RNApol_bact_RpoE"/>
    <property type="match status" value="1"/>
</dbReference>
<dbReference type="InterPro" id="IPR007759">
    <property type="entry name" value="Asxl_HARE-HTH"/>
</dbReference>
<dbReference type="InterPro" id="IPR038087">
    <property type="entry name" value="RNAP_delta_N_dom_sf"/>
</dbReference>
<dbReference type="InterPro" id="IPR029757">
    <property type="entry name" value="RpoE"/>
</dbReference>
<dbReference type="NCBIfam" id="TIGR04567">
    <property type="entry name" value="RNAP_delt_lowGC"/>
    <property type="match status" value="1"/>
</dbReference>
<dbReference type="Pfam" id="PF05066">
    <property type="entry name" value="HARE-HTH"/>
    <property type="match status" value="1"/>
</dbReference>
<dbReference type="PROSITE" id="PS51913">
    <property type="entry name" value="HTH_HARE"/>
    <property type="match status" value="1"/>
</dbReference>
<sequence length="176" mass="20881">MKIQDYTKQMVDEKSFIDMAYTLLNDKGETMNLYDIIDEFRALGDYEYEEIENRVVQFYTDLNTDGRFLNVGENLWGLRDWYSVDDIEEKIAPTIQKFDILDADDEEDQNLKLLGEDEMDDDDDIPAQTDDQEELNDPEDEQVEEEINHSDIVIEEDEDELDEDEEVFEDEEDFND</sequence>
<proteinExistence type="inferred from homology"/>
<keyword id="KW-0240">DNA-directed RNA polymerase</keyword>
<keyword id="KW-0548">Nucleotidyltransferase</keyword>
<keyword id="KW-0804">Transcription</keyword>
<keyword id="KW-0808">Transferase</keyword>
<comment type="function">
    <text evidence="1">Participates in both the initiation and recycling phases of transcription. In the presence of the delta subunit, RNAP displays an increased specificity of transcription, a decreased affinity for nucleic acids, and an increased efficiency of RNA synthesis because of enhanced recycling (By similarity).</text>
</comment>
<comment type="subunit">
    <text evidence="1">RNAP is composed of a core of 2 alpha, a beta and a beta' subunits. The core is associated with a delta subunit and one of several sigma factors (By similarity).</text>
</comment>
<comment type="similarity">
    <text evidence="4">Belongs to the RpoE family.</text>
</comment>
<evidence type="ECO:0000250" key="1"/>
<evidence type="ECO:0000255" key="2">
    <source>
        <dbReference type="PROSITE-ProRule" id="PRU01261"/>
    </source>
</evidence>
<evidence type="ECO:0000256" key="3">
    <source>
        <dbReference type="SAM" id="MobiDB-lite"/>
    </source>
</evidence>
<evidence type="ECO:0000305" key="4"/>
<reference key="1">
    <citation type="journal article" date="2002" name="Lancet">
        <title>Genome and virulence determinants of high virulence community-acquired MRSA.</title>
        <authorList>
            <person name="Baba T."/>
            <person name="Takeuchi F."/>
            <person name="Kuroda M."/>
            <person name="Yuzawa H."/>
            <person name="Aoki K."/>
            <person name="Oguchi A."/>
            <person name="Nagai Y."/>
            <person name="Iwama N."/>
            <person name="Asano K."/>
            <person name="Naimi T."/>
            <person name="Kuroda H."/>
            <person name="Cui L."/>
            <person name="Yamamoto K."/>
            <person name="Hiramatsu K."/>
        </authorList>
    </citation>
    <scope>NUCLEOTIDE SEQUENCE [LARGE SCALE GENOMIC DNA]</scope>
    <source>
        <strain>MW2</strain>
    </source>
</reference>
<gene>
    <name type="primary">rpoE</name>
    <name type="ordered locus">MW2052</name>
</gene>
<feature type="chain" id="PRO_0000204325" description="Probable DNA-directed RNA polymerase subunit delta">
    <location>
        <begin position="1"/>
        <end position="176"/>
    </location>
</feature>
<feature type="domain" description="HTH HARE-type" evidence="2">
    <location>
        <begin position="14"/>
        <end position="81"/>
    </location>
</feature>
<feature type="region of interest" description="Disordered" evidence="3">
    <location>
        <begin position="114"/>
        <end position="176"/>
    </location>
</feature>
<feature type="compositionally biased region" description="Acidic residues" evidence="3">
    <location>
        <begin position="116"/>
        <end position="145"/>
    </location>
</feature>
<feature type="compositionally biased region" description="Acidic residues" evidence="3">
    <location>
        <begin position="153"/>
        <end position="176"/>
    </location>
</feature>